<proteinExistence type="inferred from homology"/>
<accession>A3Q3C9</accession>
<protein>
    <recommendedName>
        <fullName evidence="1">Homoserine kinase</fullName>
        <shortName evidence="1">HK</shortName>
        <shortName evidence="1">HSK</shortName>
        <ecNumber evidence="1">2.7.1.39</ecNumber>
    </recommendedName>
</protein>
<gene>
    <name evidence="1" type="primary">thrB</name>
    <name type="ordered locus">Mjls_3880</name>
</gene>
<name>KHSE_MYCSJ</name>
<reference key="1">
    <citation type="submission" date="2007-02" db="EMBL/GenBank/DDBJ databases">
        <title>Complete sequence of Mycobacterium sp. JLS.</title>
        <authorList>
            <consortium name="US DOE Joint Genome Institute"/>
            <person name="Copeland A."/>
            <person name="Lucas S."/>
            <person name="Lapidus A."/>
            <person name="Barry K."/>
            <person name="Detter J.C."/>
            <person name="Glavina del Rio T."/>
            <person name="Hammon N."/>
            <person name="Israni S."/>
            <person name="Dalin E."/>
            <person name="Tice H."/>
            <person name="Pitluck S."/>
            <person name="Chain P."/>
            <person name="Malfatti S."/>
            <person name="Shin M."/>
            <person name="Vergez L."/>
            <person name="Schmutz J."/>
            <person name="Larimer F."/>
            <person name="Land M."/>
            <person name="Hauser L."/>
            <person name="Kyrpides N."/>
            <person name="Mikhailova N."/>
            <person name="Miller C.D."/>
            <person name="Anderson A.J."/>
            <person name="Sims R.C."/>
            <person name="Richardson P."/>
        </authorList>
    </citation>
    <scope>NUCLEOTIDE SEQUENCE [LARGE SCALE GENOMIC DNA]</scope>
    <source>
        <strain>JLS</strain>
    </source>
</reference>
<feature type="chain" id="PRO_1000049148" description="Homoserine kinase">
    <location>
        <begin position="1"/>
        <end position="314"/>
    </location>
</feature>
<feature type="binding site" evidence="1">
    <location>
        <begin position="95"/>
        <end position="105"/>
    </location>
    <ligand>
        <name>ATP</name>
        <dbReference type="ChEBI" id="CHEBI:30616"/>
    </ligand>
</feature>
<evidence type="ECO:0000255" key="1">
    <source>
        <dbReference type="HAMAP-Rule" id="MF_00384"/>
    </source>
</evidence>
<sequence length="314" mass="31860">MTQTLPAGLTATAMVAASSANLGPGFDSLGLALSLYDEIVVETVDSGLTVTVEGEGAGQVALDSSHLVVRAIEAGLRATGCVAPGLVVRCRNDIPHSRGLGSSAAAVVGGLAAANGLVSQTDWTPLTVEQLIQLSSAFEGHPDNAAAAVLGGAVVTWTDGAGAQARYAAAPLRVHPDIHLFPAIPQQRSSTAETRVLLPDTVSHTDARFNLSRAALLVVALTERPDLLMAATEDVLHQPQRAAAMPASAEFLRVLRGCGVAAVLSGAGPAVIALSTEPELPAEAVEFGIANGFTIAEMAVGDGVRWSTGVAAGR</sequence>
<dbReference type="EC" id="2.7.1.39" evidence="1"/>
<dbReference type="EMBL" id="CP000580">
    <property type="protein sequence ID" value="ABN99656.1"/>
    <property type="molecule type" value="Genomic_DNA"/>
</dbReference>
<dbReference type="SMR" id="A3Q3C9"/>
<dbReference type="KEGG" id="mjl:Mjls_3880"/>
<dbReference type="HOGENOM" id="CLU_041243_0_1_11"/>
<dbReference type="BioCyc" id="MSP164757:G1G8C-3920-MONOMER"/>
<dbReference type="UniPathway" id="UPA00050">
    <property type="reaction ID" value="UER00064"/>
</dbReference>
<dbReference type="GO" id="GO:0005737">
    <property type="term" value="C:cytoplasm"/>
    <property type="evidence" value="ECO:0007669"/>
    <property type="project" value="UniProtKB-SubCell"/>
</dbReference>
<dbReference type="GO" id="GO:0005524">
    <property type="term" value="F:ATP binding"/>
    <property type="evidence" value="ECO:0007669"/>
    <property type="project" value="UniProtKB-UniRule"/>
</dbReference>
<dbReference type="GO" id="GO:0004413">
    <property type="term" value="F:homoserine kinase activity"/>
    <property type="evidence" value="ECO:0007669"/>
    <property type="project" value="UniProtKB-UniRule"/>
</dbReference>
<dbReference type="GO" id="GO:0009088">
    <property type="term" value="P:threonine biosynthetic process"/>
    <property type="evidence" value="ECO:0007669"/>
    <property type="project" value="UniProtKB-UniRule"/>
</dbReference>
<dbReference type="Gene3D" id="3.30.230.10">
    <property type="match status" value="1"/>
</dbReference>
<dbReference type="Gene3D" id="3.30.70.890">
    <property type="entry name" value="GHMP kinase, C-terminal domain"/>
    <property type="match status" value="1"/>
</dbReference>
<dbReference type="HAMAP" id="MF_00384">
    <property type="entry name" value="Homoser_kinase"/>
    <property type="match status" value="1"/>
</dbReference>
<dbReference type="InterPro" id="IPR013750">
    <property type="entry name" value="GHMP_kinase_C_dom"/>
</dbReference>
<dbReference type="InterPro" id="IPR036554">
    <property type="entry name" value="GHMP_kinase_C_sf"/>
</dbReference>
<dbReference type="InterPro" id="IPR006204">
    <property type="entry name" value="GHMP_kinase_N_dom"/>
</dbReference>
<dbReference type="InterPro" id="IPR006203">
    <property type="entry name" value="GHMP_knse_ATP-bd_CS"/>
</dbReference>
<dbReference type="InterPro" id="IPR000870">
    <property type="entry name" value="Homoserine_kinase"/>
</dbReference>
<dbReference type="InterPro" id="IPR020568">
    <property type="entry name" value="Ribosomal_Su5_D2-typ_SF"/>
</dbReference>
<dbReference type="InterPro" id="IPR014721">
    <property type="entry name" value="Ribsml_uS5_D2-typ_fold_subgr"/>
</dbReference>
<dbReference type="NCBIfam" id="TIGR00191">
    <property type="entry name" value="thrB"/>
    <property type="match status" value="1"/>
</dbReference>
<dbReference type="PANTHER" id="PTHR20861:SF1">
    <property type="entry name" value="HOMOSERINE KINASE"/>
    <property type="match status" value="1"/>
</dbReference>
<dbReference type="PANTHER" id="PTHR20861">
    <property type="entry name" value="HOMOSERINE/4-DIPHOSPHOCYTIDYL-2-C-METHYL-D-ERYTHRITOL KINASE"/>
    <property type="match status" value="1"/>
</dbReference>
<dbReference type="Pfam" id="PF08544">
    <property type="entry name" value="GHMP_kinases_C"/>
    <property type="match status" value="1"/>
</dbReference>
<dbReference type="Pfam" id="PF00288">
    <property type="entry name" value="GHMP_kinases_N"/>
    <property type="match status" value="1"/>
</dbReference>
<dbReference type="PIRSF" id="PIRSF000676">
    <property type="entry name" value="Homoser_kin"/>
    <property type="match status" value="1"/>
</dbReference>
<dbReference type="PRINTS" id="PR00958">
    <property type="entry name" value="HOMSERKINASE"/>
</dbReference>
<dbReference type="SUPFAM" id="SSF55060">
    <property type="entry name" value="GHMP Kinase, C-terminal domain"/>
    <property type="match status" value="1"/>
</dbReference>
<dbReference type="SUPFAM" id="SSF54211">
    <property type="entry name" value="Ribosomal protein S5 domain 2-like"/>
    <property type="match status" value="1"/>
</dbReference>
<dbReference type="PROSITE" id="PS00627">
    <property type="entry name" value="GHMP_KINASES_ATP"/>
    <property type="match status" value="1"/>
</dbReference>
<comment type="function">
    <text evidence="1">Catalyzes the ATP-dependent phosphorylation of L-homoserine to L-homoserine phosphate.</text>
</comment>
<comment type="catalytic activity">
    <reaction evidence="1">
        <text>L-homoserine + ATP = O-phospho-L-homoserine + ADP + H(+)</text>
        <dbReference type="Rhea" id="RHEA:13985"/>
        <dbReference type="ChEBI" id="CHEBI:15378"/>
        <dbReference type="ChEBI" id="CHEBI:30616"/>
        <dbReference type="ChEBI" id="CHEBI:57476"/>
        <dbReference type="ChEBI" id="CHEBI:57590"/>
        <dbReference type="ChEBI" id="CHEBI:456216"/>
        <dbReference type="EC" id="2.7.1.39"/>
    </reaction>
</comment>
<comment type="pathway">
    <text evidence="1">Amino-acid biosynthesis; L-threonine biosynthesis; L-threonine from L-aspartate: step 4/5.</text>
</comment>
<comment type="subcellular location">
    <subcellularLocation>
        <location evidence="1">Cytoplasm</location>
    </subcellularLocation>
</comment>
<comment type="similarity">
    <text evidence="1">Belongs to the GHMP kinase family. Homoserine kinase subfamily.</text>
</comment>
<keyword id="KW-0028">Amino-acid biosynthesis</keyword>
<keyword id="KW-0067">ATP-binding</keyword>
<keyword id="KW-0963">Cytoplasm</keyword>
<keyword id="KW-0418">Kinase</keyword>
<keyword id="KW-0547">Nucleotide-binding</keyword>
<keyword id="KW-0791">Threonine biosynthesis</keyword>
<keyword id="KW-0808">Transferase</keyword>
<organism>
    <name type="scientific">Mycobacterium sp. (strain JLS)</name>
    <dbReference type="NCBI Taxonomy" id="164757"/>
    <lineage>
        <taxon>Bacteria</taxon>
        <taxon>Bacillati</taxon>
        <taxon>Actinomycetota</taxon>
        <taxon>Actinomycetes</taxon>
        <taxon>Mycobacteriales</taxon>
        <taxon>Mycobacteriaceae</taxon>
        <taxon>Mycobacterium</taxon>
    </lineage>
</organism>